<name>PSBC_THEVB</name>
<comment type="function">
    <text evidence="1 5 6 9">One of the components of the core complex of photosystem II (PSII). It binds chlorophyll and helps catalyze the primary light-induced photochemical processes of PSII. PSII is a light-driven water:plastoquinone oxidoreductase, using light energy to abstract electrons from H(2)O, generating O(2) and a proton gradient subsequently used for ATP formation.</text>
</comment>
<comment type="cofactor">
    <text evidence="1 2 3 4 5 6 7 8 9 10 12">Binds multiple chlorophylls and provides some of the ligands for the Ca-4Mn-5O cluster of the oxygen-evolving complex. It may also provide a ligand for a Cl- that is required for oxygen evolution. PSII binds additional chlorophylls, carotenoids and specific lipids.</text>
</comment>
<comment type="subunit">
    <text evidence="1 2 3 4 5 6 7 8 9 10 11 12">PSII is composed of 1 copy each of membrane proteins PsbA, PsbB, PsbC, PsbD, PsbE, PsbF, PsbH, PsbI, PsbJ, PsbK, PsbL, PsbM, PsbT, PsbX, PsbY, PsbZ, Psb30/Ycf12, peripheral proteins PsbO, CyanoQ (PsbQ), PsbU, PsbV and a large number of cofactors. It forms dimeric complexes. Part of a photosystem II (PSII) assembly intermediate complex PSII-I; crystallized from a strain deleted of psbJ, it forms monomeric PSII before addition of the oxygen evolving complex. PSII-I includes 3 assembly factors not found in mature PSII (Psb27, Psb28 and Psb34), and CP43 (this protein) is not in its mature conformation (PubMed:33846594).</text>
</comment>
<comment type="subcellular location">
    <subcellularLocation>
        <location evidence="1 2 3 4 5 6 7 8 9 10 11 12">Cellular thylakoid membrane</location>
        <topology evidence="1 2 3 4 5 6 7 8 9 10 11 12">Multi-pass membrane protein</topology>
    </subcellularLocation>
</comment>
<comment type="mass spectrometry" mass="51704.0" error="87.0" method="MALDI" evidence="4"/>
<comment type="similarity">
    <text evidence="1">Belongs to the PsbB/PsbC family. PsbC subfamily.</text>
</comment>
<reference key="1">
    <citation type="journal article" date="2002" name="DNA Res.">
        <title>Complete genome structure of the thermophilic cyanobacterium Thermosynechococcus elongatus BP-1.</title>
        <authorList>
            <person name="Nakamura Y."/>
            <person name="Kaneko T."/>
            <person name="Sato S."/>
            <person name="Ikeuchi M."/>
            <person name="Katoh H."/>
            <person name="Sasamoto S."/>
            <person name="Watanabe A."/>
            <person name="Iriguchi M."/>
            <person name="Kawashima K."/>
            <person name="Kimura T."/>
            <person name="Kishida Y."/>
            <person name="Kiyokawa C."/>
            <person name="Kohara M."/>
            <person name="Matsumoto M."/>
            <person name="Matsuno A."/>
            <person name="Nakazaki N."/>
            <person name="Shimpo S."/>
            <person name="Sugimoto M."/>
            <person name="Takeuchi C."/>
            <person name="Yamada M."/>
            <person name="Tabata S."/>
        </authorList>
    </citation>
    <scope>NUCLEOTIDE SEQUENCE [LARGE SCALE GENOMIC DNA]</scope>
    <source>
        <strain>NIES-2133 / IAM M-273 / BP-1</strain>
    </source>
</reference>
<reference key="2">
    <citation type="journal article" date="2004" name="Phys. Chem. Chem. Phys.">
        <title>Crystal structure of cyanobacterial photosystem II at 3.2 A resolution: a closer look at the Mn-cluster.</title>
        <authorList>
            <person name="Biesiadka J."/>
            <person name="Loll B."/>
            <person name="Kern J."/>
            <person name="Irrgang K.-D."/>
            <person name="Zouni A."/>
        </authorList>
    </citation>
    <scope>X-RAY CRYSTALLOGRAPHY (3.20 ANGSTROMS) OF 2-461 IN PHOTOSYSTEM II</scope>
    <scope>COFACTOR</scope>
    <scope>SUBUNIT</scope>
    <scope>SUBCELLULAR LOCATION</scope>
</reference>
<reference key="3">
    <citation type="journal article" date="2004" name="Science">
        <title>Architecture of the photosynthetic oxygen-evolving center.</title>
        <authorList>
            <person name="Ferreira K.N."/>
            <person name="Iverson T.M."/>
            <person name="Maghlaoui K."/>
            <person name="Barber J."/>
            <person name="Iwata S."/>
        </authorList>
    </citation>
    <scope>X-RAY CRYSTALLOGRAPHY (3.50 ANGSTROMS) OF 2-461 IN PHOTOSYSTEM II WITH MANGANESE</scope>
    <scope>COFACTOR</scope>
    <scope>SUBUNIT</scope>
    <scope>SUBCELLULAR LOCATION</scope>
</reference>
<reference key="4">
    <citation type="journal article" date="2005" name="Nature">
        <title>Towards complete cofactor arrangement in the 3.0 A resolution structure of photosystem II.</title>
        <authorList>
            <person name="Loll B."/>
            <person name="Kern J."/>
            <person name="Saenger W."/>
            <person name="Zouni A."/>
            <person name="Biesiadka J."/>
        </authorList>
    </citation>
    <scope>X-RAY CRYSTALLOGRAPHY (3.00 ANGSTROMS) OF 2-461 IN PHOTOSYSTEM II WITH MANGANESE</scope>
    <scope>COFACTOR</scope>
    <scope>SUBUNIT</scope>
    <scope>SUBCELLULAR LOCATION</scope>
    <source>
        <strain>NIES-2133 / IAM M-273 / BP-1</strain>
    </source>
</reference>
<reference key="5">
    <citation type="journal article" date="2009" name="Nat. Struct. Mol. Biol.">
        <title>Cyanobacterial photosystem II at 2.9-A resolution and the role of quinones, lipids, channels and chloride.</title>
        <authorList>
            <person name="Guskov A."/>
            <person name="Kern J."/>
            <person name="Gabdulkhakov A."/>
            <person name="Broser M."/>
            <person name="Zouni A."/>
            <person name="Saenger W."/>
        </authorList>
    </citation>
    <scope>X-RAY CRYSTALLOGRAPHY (2.90 ANGSTROMS) IN PHOTOSYSTEM II WITH MANGANESE</scope>
    <scope>COFACTOR</scope>
    <scope>SUBUNIT</scope>
    <scope>SUBCELLULAR LOCATION</scope>
    <scope>MASS SPECTROMETRY</scope>
    <source>
        <strain>NIES-2133 / IAM M-273 / BP-1</strain>
    </source>
</reference>
<reference key="6">
    <citation type="journal article" date="2010" name="J. Biol. Chem.">
        <title>Crystal structure of monomeric photosystem II from Thermosynechococcus elongatus at 3.6 A resolution.</title>
        <authorList>
            <person name="Broser M."/>
            <person name="Gabdulkhakov A."/>
            <person name="Kern J."/>
            <person name="Guskov A."/>
            <person name="Muh F."/>
            <person name="Saenger W."/>
            <person name="Zouni A."/>
        </authorList>
    </citation>
    <scope>X-RAY CRYSTALLOGRAPHY (3.60 ANGSTROMS) IN PHOTOSYSTEM II WITH MANGANESE</scope>
    <scope>FUNCTION</scope>
    <scope>COFACTOR</scope>
    <scope>SUBUNIT</scope>
    <scope>SUBCELLULAR LOCATION</scope>
    <source>
        <strain>NIES-2133 / IAM M-273 / BP-1</strain>
    </source>
</reference>
<reference key="7">
    <citation type="journal article" date="2011" name="J. Biol. Chem.">
        <title>Structural basis of cyanobacterial photosystem II inhibition by the herbicide terbutryn.</title>
        <authorList>
            <person name="Broser M."/>
            <person name="Glockner C."/>
            <person name="Gabdulkhakov A."/>
            <person name="Guskov A."/>
            <person name="Buchta J."/>
            <person name="Kern J."/>
            <person name="Muh F."/>
            <person name="Dau H."/>
            <person name="Saenger W."/>
            <person name="Zouni A."/>
        </authorList>
    </citation>
    <scope>X-RAY CRYSTALLOGRAPHY (3.20 ANGSTROMS) IN PHOTOSYSTEM II WITH MANGANESE</scope>
    <scope>FUNCTION</scope>
    <scope>COFACTOR</scope>
    <scope>SUBUNIT</scope>
    <scope>SUBCELLULAR LOCATION</scope>
</reference>
<reference key="8">
    <citation type="journal article" date="2012" name="Proc. Natl. Acad. Sci. U.S.A.">
        <title>Room temperature femtosecond X-ray diffraction of photosystem II microcrystals.</title>
        <authorList>
            <person name="Kern J."/>
            <person name="Alonso-Mori R."/>
            <person name="Hellmich J."/>
            <person name="Tran R."/>
            <person name="Hattne J."/>
            <person name="Laksmono H."/>
            <person name="Glockner C."/>
            <person name="Echols N."/>
            <person name="Sierra R.G."/>
            <person name="Sellberg J."/>
            <person name="Lassalle-Kaiser B."/>
            <person name="Gildea R.J."/>
            <person name="Glatzel P."/>
            <person name="Grosse-Kunstleve R.W."/>
            <person name="Latimer M.J."/>
            <person name="McQueen T.A."/>
            <person name="DiFiore D."/>
            <person name="Fry A.R."/>
            <person name="Messerschmidt M."/>
            <person name="Miahnahri A."/>
            <person name="Schafer D.W."/>
            <person name="Seibert M.M."/>
            <person name="Sokaras D."/>
            <person name="Weng T.C."/>
            <person name="Zwart P.H."/>
            <person name="White W.E."/>
            <person name="Adams P.D."/>
            <person name="Bogan M.J."/>
            <person name="Boutet S."/>
            <person name="Williams G.J."/>
            <person name="Messinger J."/>
            <person name="Sauter N.K."/>
            <person name="Zouni A."/>
            <person name="Bergmann U."/>
            <person name="Yano J."/>
            <person name="Yachandra V.K."/>
        </authorList>
    </citation>
    <scope>X-RAY CRYSTALLOGRAPHY (6.56 ANGSTROMS) IN PHOTOSYSTEM II WITH MANGANESE</scope>
    <scope>COFACTOR</scope>
    <scope>SUBCELLULAR LOCATION</scope>
    <source>
        <strain>NIES-2133 / IAM M-273 / BP-1</strain>
    </source>
</reference>
<reference key="9">
    <citation type="journal article" date="2013" name="Science">
        <title>Simultaneous femtosecond X-ray spectroscopy and diffraction of photosystem II at room temperature.</title>
        <authorList>
            <person name="Kern J."/>
            <person name="Alonso-Mori R."/>
            <person name="Tran R."/>
            <person name="Hattne J."/>
            <person name="Gildea R.J."/>
            <person name="Echols N."/>
            <person name="Glockner C."/>
            <person name="Hellmich J."/>
            <person name="Laksmono H."/>
            <person name="Sierra R.G."/>
            <person name="Lassalle-Kaiser B."/>
            <person name="Koroidov S."/>
            <person name="Lampe A."/>
            <person name="Han G."/>
            <person name="Gul S."/>
            <person name="Difiore D."/>
            <person name="Milathianaki D."/>
            <person name="Fry A.R."/>
            <person name="Miahnahri A."/>
            <person name="Schafer D.W."/>
            <person name="Messerschmidt M."/>
            <person name="Seibert M.M."/>
            <person name="Koglin J.E."/>
            <person name="Sokaras D."/>
            <person name="Weng T.C."/>
            <person name="Sellberg J."/>
            <person name="Latimer M.J."/>
            <person name="Grosse-Kunstleve R.W."/>
            <person name="Zwart P.H."/>
            <person name="White W.E."/>
            <person name="Glatzel P."/>
            <person name="Adams P.D."/>
            <person name="Bogan M.J."/>
            <person name="Williams G.J."/>
            <person name="Boutet S."/>
            <person name="Messinger J."/>
            <person name="Zouni A."/>
            <person name="Sauter N.K."/>
            <person name="Yachandra V.K."/>
            <person name="Bergmann U."/>
            <person name="Yano J."/>
        </authorList>
    </citation>
    <scope>X-RAY CRYSTALLOGRAPHY (5.70 ANGSTROMS) IN PHOTOSYSTEM II WITH MANGANESE</scope>
    <scope>COFACTOR</scope>
    <scope>SUBUNIT</scope>
    <scope>SUBCELLULAR LOCATION</scope>
    <source>
        <strain>NIES-2133 / IAM M-273 / BP-1</strain>
    </source>
</reference>
<reference key="10">
    <citation type="journal article" date="2014" name="Nature">
        <title>Serial time-resolved crystallography of photosystem II using a femtosecond X-ray laser.</title>
        <authorList>
            <person name="Kupitz C."/>
            <person name="Basu S."/>
            <person name="Grotjohann I."/>
            <person name="Fromme R."/>
            <person name="Zatsepin N.A."/>
            <person name="Rendek K.N."/>
            <person name="Hunter M.S."/>
            <person name="Shoeman R.L."/>
            <person name="White T.A."/>
            <person name="Wang D."/>
            <person name="James D."/>
            <person name="Yang J.H."/>
            <person name="Cobb D.E."/>
            <person name="Reeder B."/>
            <person name="Sierra R.G."/>
            <person name="Liu H."/>
            <person name="Barty A."/>
            <person name="Aquila A.L."/>
            <person name="Deponte D."/>
            <person name="Kirian R.A."/>
            <person name="Bari S."/>
            <person name="Bergkamp J.J."/>
            <person name="Beyerlein K.R."/>
            <person name="Bogan M.J."/>
            <person name="Caleman C."/>
            <person name="Chao T.C."/>
            <person name="Conrad C.E."/>
            <person name="Davis K.M."/>
            <person name="Fleckenstein H."/>
            <person name="Galli L."/>
            <person name="Hau-Riege S.P."/>
            <person name="Kassemeyer S."/>
            <person name="Laksmono H."/>
            <person name="Liang M."/>
            <person name="Lomb L."/>
            <person name="Marchesini S."/>
            <person name="Martin A.V."/>
            <person name="Messerschmidt M."/>
            <person name="Milathianaki D."/>
            <person name="Nass K."/>
            <person name="Ros A."/>
            <person name="Roy-Chowdhury S."/>
            <person name="Schmidt K."/>
            <person name="Seibert M."/>
            <person name="Steinbrener J."/>
            <person name="Stellato F."/>
            <person name="Yan L."/>
            <person name="Yoon C."/>
            <person name="Moore T.A."/>
            <person name="Moore A.L."/>
            <person name="Pushkar Y."/>
            <person name="Williams G.J."/>
            <person name="Boutet S."/>
            <person name="Doak R.B."/>
            <person name="Weierstall U."/>
            <person name="Frank M."/>
            <person name="Chapman H.N."/>
            <person name="Spence J.C."/>
            <person name="Fromme P."/>
        </authorList>
    </citation>
    <scope>X-RAY CRYSTALLOGRAPHY (5.00 ANGSTROMS) OF 7-461 IN PHOTOSYSTEM II WITH MANGANESE</scope>
    <scope>COFACTOR</scope>
    <scope>SUBUNIT</scope>
    <scope>SUBCELLULAR LOCATION</scope>
    <source>
        <strain>NIES-2133 / IAM M-273 / BP-1</strain>
    </source>
</reference>
<reference key="11">
    <citation type="journal article" date="2014" name="Nat. Commun.">
        <title>Taking snapshots of photosynthetic water oxidation using femtosecond X-ray diffraction and spectroscopy.</title>
        <authorList>
            <person name="Kern J."/>
            <person name="Tran R."/>
            <person name="Alonso-Mori R."/>
            <person name="Koroidov S."/>
            <person name="Echols N."/>
            <person name="Hattne J."/>
            <person name="Ibrahim M."/>
            <person name="Gul S."/>
            <person name="Laksmono H."/>
            <person name="Sierra R.G."/>
            <person name="Gildea R.J."/>
            <person name="Han G."/>
            <person name="Hellmich J."/>
            <person name="Lassalle-Kaiser B."/>
            <person name="Chatterjee R."/>
            <person name="Brewster A.S."/>
            <person name="Stan C.A."/>
            <person name="Gloeckner C."/>
            <person name="Lampe A."/>
            <person name="DiFiore D."/>
            <person name="Milathianaki D."/>
            <person name="Fry A.R."/>
            <person name="Seibert M.M."/>
            <person name="Koglin J.E."/>
            <person name="Gallo E."/>
            <person name="Uhlig J."/>
            <person name="Sokaras D."/>
            <person name="Weng T.C."/>
            <person name="Zwart P.H."/>
            <person name="Skinner D.E."/>
            <person name="Bogan M.J."/>
            <person name="Messerschmidt M."/>
            <person name="Glatzel P."/>
            <person name="Williams G.J."/>
            <person name="Boutet S."/>
            <person name="Adams P.D."/>
            <person name="Zouni A."/>
            <person name="Messinger J."/>
            <person name="Sauter N.K."/>
            <person name="Bergmann U."/>
            <person name="Yano J."/>
            <person name="Yachandra V.K."/>
        </authorList>
    </citation>
    <scope>X-RAY CRYSTALLOGRAPHY (4.50 ANGSTROMS) IN PHOTOSYSTEM II WITH MANGANESE</scope>
    <scope>FUNCTION</scope>
    <scope>COFACTOR</scope>
    <scope>SUBUNIT</scope>
    <scope>SUBCELLULAR LOCATION</scope>
    <source>
        <strain>NIES-2133 / IAM M-273 / BP-1</strain>
    </source>
</reference>
<reference evidence="21 22 23" key="12">
    <citation type="journal article" date="2021" name="Nat. Plants">
        <title>Structural insights into photosystem II assembly.</title>
        <authorList>
            <person name="Zabret J."/>
            <person name="Bohn S."/>
            <person name="Schuller S.K."/>
            <person name="Arnolds O."/>
            <person name="Moller M."/>
            <person name="Meier-Credo J."/>
            <person name="Liauw P."/>
            <person name="Chan A."/>
            <person name="Tajkhorshid E."/>
            <person name="Langer J.D."/>
            <person name="Stoll R."/>
            <person name="Krieger-Liszkay A."/>
            <person name="Engel B.D."/>
            <person name="Rudack T."/>
            <person name="Schuller J.M."/>
            <person name="Nowaczyk M.M."/>
        </authorList>
    </citation>
    <scope>STRUCTURE BY ELECTRON MICROSCOPY (2.68 ANGSTROMS) IN PSII-I ASSEMBLY COMPLEX</scope>
    <scope>SUBUNIT</scope>
    <scope>SUBCELLULAR LOCATION</scope>
    <scope>TOPOLOGY</scope>
    <source>
        <strain>NIES-2133 / IAM M-273 / BP-1</strain>
    </source>
</reference>
<feature type="chain" id="PRO_0000430807" description="Photosystem II CP43 reaction center protein">
    <location>
        <begin position="1"/>
        <end position="461"/>
    </location>
</feature>
<feature type="topological domain" description="Cytoplasmic" evidence="20">
    <location>
        <begin position="1"/>
        <end position="48"/>
    </location>
</feature>
<feature type="transmembrane region" description="Helical" evidence="20">
    <location>
        <begin position="49"/>
        <end position="71"/>
    </location>
</feature>
<feature type="topological domain" description="Lumenal" evidence="20">
    <location>
        <begin position="72"/>
        <end position="111"/>
    </location>
</feature>
<feature type="transmembrane region" description="Helical" evidence="20">
    <location>
        <begin position="112"/>
        <end position="133"/>
    </location>
</feature>
<feature type="topological domain" description="Cytoplasmic" evidence="20">
    <location>
        <begin position="134"/>
        <end position="155"/>
    </location>
</feature>
<feature type="transmembrane region" description="Helical" evidence="20">
    <location>
        <begin position="156"/>
        <end position="178"/>
    </location>
</feature>
<feature type="topological domain" description="Lumenal" evidence="20">
    <location>
        <begin position="179"/>
        <end position="232"/>
    </location>
</feature>
<feature type="transmembrane region" description="Helical" evidence="20">
    <location>
        <begin position="233"/>
        <end position="253"/>
    </location>
</feature>
<feature type="topological domain" description="Cytoplasmic" evidence="20">
    <location>
        <begin position="254"/>
        <end position="268"/>
    </location>
</feature>
<feature type="transmembrane region" description="Helical" evidence="20">
    <location>
        <begin position="269"/>
        <end position="289"/>
    </location>
</feature>
<feature type="topological domain" description="Lumenal" evidence="20">
    <location>
        <begin position="290"/>
        <end position="424"/>
    </location>
</feature>
<feature type="transmembrane region" description="Helical" evidence="20">
    <location>
        <begin position="425"/>
        <end position="449"/>
    </location>
</feature>
<feature type="topological domain" description="Cytoplasmic" evidence="20">
    <location>
        <begin position="450"/>
        <end position="461"/>
    </location>
</feature>
<feature type="binding site" evidence="1 3 4 13 14 15 16 17 18 19">
    <location>
        <position position="355"/>
    </location>
    <ligand>
        <name>[CaMn4O5] cluster</name>
        <dbReference type="ChEBI" id="CHEBI:189552"/>
    </ligand>
</feature>
<feature type="helix" evidence="27">
    <location>
        <begin position="16"/>
        <end position="19"/>
    </location>
</feature>
<feature type="helix" evidence="27">
    <location>
        <begin position="23"/>
        <end position="30"/>
    </location>
</feature>
<feature type="helix" evidence="27">
    <location>
        <begin position="34"/>
        <end position="62"/>
    </location>
</feature>
<feature type="helix" evidence="27">
    <location>
        <begin position="69"/>
        <end position="71"/>
    </location>
</feature>
<feature type="helix" evidence="27">
    <location>
        <begin position="76"/>
        <end position="82"/>
    </location>
</feature>
<feature type="strand" evidence="27">
    <location>
        <begin position="85"/>
        <end position="87"/>
    </location>
</feature>
<feature type="helix" evidence="27">
    <location>
        <begin position="89"/>
        <end position="91"/>
    </location>
</feature>
<feature type="strand" evidence="26">
    <location>
        <begin position="92"/>
        <end position="94"/>
    </location>
</feature>
<feature type="helix" evidence="27">
    <location>
        <begin position="97"/>
        <end position="122"/>
    </location>
</feature>
<feature type="strand" evidence="29">
    <location>
        <begin position="126"/>
        <end position="128"/>
    </location>
</feature>
<feature type="turn" evidence="27">
    <location>
        <begin position="129"/>
        <end position="131"/>
    </location>
</feature>
<feature type="turn" evidence="27">
    <location>
        <begin position="133"/>
        <end position="135"/>
    </location>
</feature>
<feature type="helix" evidence="27">
    <location>
        <begin position="142"/>
        <end position="169"/>
    </location>
</feature>
<feature type="strand" evidence="27">
    <location>
        <begin position="173"/>
        <end position="175"/>
    </location>
</feature>
<feature type="turn" evidence="28">
    <location>
        <begin position="179"/>
        <end position="181"/>
    </location>
</feature>
<feature type="strand" evidence="27">
    <location>
        <begin position="183"/>
        <end position="185"/>
    </location>
</feature>
<feature type="helix" evidence="27">
    <location>
        <begin position="194"/>
        <end position="201"/>
    </location>
</feature>
<feature type="turn" evidence="27">
    <location>
        <begin position="207"/>
        <end position="209"/>
    </location>
</feature>
<feature type="helix" evidence="27">
    <location>
        <begin position="211"/>
        <end position="214"/>
    </location>
</feature>
<feature type="helix" evidence="27">
    <location>
        <begin position="218"/>
        <end position="241"/>
    </location>
</feature>
<feature type="helix" evidence="27">
    <location>
        <begin position="246"/>
        <end position="251"/>
    </location>
</feature>
<feature type="helix" evidence="27">
    <location>
        <begin position="256"/>
        <end position="280"/>
    </location>
</feature>
<feature type="turn" evidence="27">
    <location>
        <begin position="283"/>
        <end position="286"/>
    </location>
</feature>
<feature type="helix" evidence="27">
    <location>
        <begin position="287"/>
        <end position="290"/>
    </location>
</feature>
<feature type="helix" evidence="27">
    <location>
        <begin position="294"/>
        <end position="311"/>
    </location>
</feature>
<feature type="turn" evidence="27">
    <location>
        <begin position="316"/>
        <end position="318"/>
    </location>
</feature>
<feature type="strand" evidence="27">
    <location>
        <begin position="324"/>
        <end position="331"/>
    </location>
</feature>
<feature type="strand" evidence="27">
    <location>
        <begin position="337"/>
        <end position="339"/>
    </location>
</feature>
<feature type="helix" evidence="27">
    <location>
        <begin position="341"/>
        <end position="346"/>
    </location>
</feature>
<feature type="turn" evidence="27">
    <location>
        <begin position="352"/>
        <end position="354"/>
    </location>
</feature>
<feature type="helix" evidence="27">
    <location>
        <begin position="355"/>
        <end position="357"/>
    </location>
</feature>
<feature type="strand" evidence="24">
    <location>
        <begin position="360"/>
        <end position="363"/>
    </location>
</feature>
<feature type="helix" evidence="27">
    <location>
        <begin position="365"/>
        <end position="370"/>
    </location>
</feature>
<feature type="helix" evidence="27">
    <location>
        <begin position="374"/>
        <end position="384"/>
    </location>
</feature>
<feature type="strand" evidence="27">
    <location>
        <begin position="395"/>
        <end position="398"/>
    </location>
</feature>
<feature type="strand" evidence="25">
    <location>
        <begin position="399"/>
        <end position="401"/>
    </location>
</feature>
<feature type="helix" evidence="27">
    <location>
        <begin position="410"/>
        <end position="441"/>
    </location>
</feature>
<feature type="helix" evidence="27">
    <location>
        <begin position="449"/>
        <end position="451"/>
    </location>
</feature>
<feature type="helix" evidence="27">
    <location>
        <begin position="453"/>
        <end position="456"/>
    </location>
</feature>
<organism>
    <name type="scientific">Thermosynechococcus vestitus (strain NIES-2133 / IAM M-273 / BP-1)</name>
    <dbReference type="NCBI Taxonomy" id="197221"/>
    <lineage>
        <taxon>Bacteria</taxon>
        <taxon>Bacillati</taxon>
        <taxon>Cyanobacteriota</taxon>
        <taxon>Cyanophyceae</taxon>
        <taxon>Acaryochloridales</taxon>
        <taxon>Thermosynechococcaceae</taxon>
        <taxon>Thermosynechococcus</taxon>
    </lineage>
</organism>
<sequence length="461" mass="50245">MVTLSSNSIFATNRDQESSGFAWWAGNARLINLSGKLLGAHVAHAGLIVFWAGAMTLFELAHFIPEKPMYEQGLILIPHIATLGWGVGPGGEVVDTFPFFVVGVVHLISSAVLGFGGVYHAIRGPETLEEYSSFFGYDWKDKNKMTTILGFHLIVLGIGALLLVAKAMFFGGLYDTWAPGGGDVRVITNPTLDPRVIFGYLLKSPFGGEGWIVSVNNLEDVVGGHIWIGLICIAGGIWHILTTPFGWARRAFIWSGEAYLSYSLGALSMMGFIATCFVWFNNTVYPSEFYGPTGPEASQAQAMTFLIRDQKLGANVGSAQGPTGLGKYLMRSPTGEIIFGGETMRFWDFRGPWLEPLRGPNGLDLNKIKNDIQPWQERRAAEYMTHAPLGSLNSVGGVATEINSVNFVSPRSWLATSHFVLAFFFLVGHLWHAGRARAAAAGFEKGIDRESEPVLSMPSLD</sequence>
<gene>
    <name evidence="1" type="primary">psbC</name>
    <name type="ordered locus">tlr1631</name>
</gene>
<proteinExistence type="evidence at protein level"/>
<evidence type="ECO:0000255" key="1">
    <source>
        <dbReference type="HAMAP-Rule" id="MF_01496"/>
    </source>
</evidence>
<evidence type="ECO:0000269" key="2">
    <source>
    </source>
</evidence>
<evidence type="ECO:0000269" key="3">
    <source>
    </source>
</evidence>
<evidence type="ECO:0000269" key="4">
    <source>
    </source>
</evidence>
<evidence type="ECO:0000269" key="5">
    <source>
    </source>
</evidence>
<evidence type="ECO:0000269" key="6">
    <source>
    </source>
</evidence>
<evidence type="ECO:0000269" key="7">
    <source>
    </source>
</evidence>
<evidence type="ECO:0000269" key="8">
    <source>
    </source>
</evidence>
<evidence type="ECO:0000269" key="9">
    <source>
    </source>
</evidence>
<evidence type="ECO:0000269" key="10">
    <source>
    </source>
</evidence>
<evidence type="ECO:0000269" key="11">
    <source>
    </source>
</evidence>
<evidence type="ECO:0000269" key="12">
    <source ref="2"/>
</evidence>
<evidence type="ECO:0000303" key="13">
    <source>
    </source>
</evidence>
<evidence type="ECO:0000303" key="14">
    <source>
    </source>
</evidence>
<evidence type="ECO:0000303" key="15">
    <source>
    </source>
</evidence>
<evidence type="ECO:0000303" key="16">
    <source>
    </source>
</evidence>
<evidence type="ECO:0000303" key="17">
    <source>
    </source>
</evidence>
<evidence type="ECO:0000303" key="18">
    <source>
    </source>
</evidence>
<evidence type="ECO:0000303" key="19">
    <source>
    </source>
</evidence>
<evidence type="ECO:0000312" key="20">
    <source>
        <dbReference type="PDB" id="7RF1"/>
    </source>
</evidence>
<evidence type="ECO:0007744" key="21">
    <source>
        <dbReference type="PDB" id="7NHO"/>
    </source>
</evidence>
<evidence type="ECO:0007744" key="22">
    <source>
        <dbReference type="PDB" id="7NHP"/>
    </source>
</evidence>
<evidence type="ECO:0007744" key="23">
    <source>
        <dbReference type="PDB" id="7NHQ"/>
    </source>
</evidence>
<evidence type="ECO:0007829" key="24">
    <source>
        <dbReference type="PDB" id="2AXT"/>
    </source>
</evidence>
<evidence type="ECO:0007829" key="25">
    <source>
        <dbReference type="PDB" id="7NHO"/>
    </source>
</evidence>
<evidence type="ECO:0007829" key="26">
    <source>
        <dbReference type="PDB" id="7NHP"/>
    </source>
</evidence>
<evidence type="ECO:0007829" key="27">
    <source>
        <dbReference type="PDB" id="7YQ2"/>
    </source>
</evidence>
<evidence type="ECO:0007829" key="28">
    <source>
        <dbReference type="PDB" id="8F4C"/>
    </source>
</evidence>
<evidence type="ECO:0007829" key="29">
    <source>
        <dbReference type="PDB" id="8F4F"/>
    </source>
</evidence>
<accession>Q8DIF8</accession>
<protein>
    <recommendedName>
        <fullName evidence="1">Photosystem II CP43 reaction center protein</fullName>
    </recommendedName>
    <alternativeName>
        <fullName evidence="1">PSII 43 kDa protein</fullName>
    </alternativeName>
    <alternativeName>
        <fullName evidence="1">Protein CP-43</fullName>
    </alternativeName>
</protein>
<dbReference type="EMBL" id="BA000039">
    <property type="protein sequence ID" value="BAC09183.2"/>
    <property type="molecule type" value="Genomic_DNA"/>
</dbReference>
<dbReference type="RefSeq" id="NP_682421.1">
    <property type="nucleotide sequence ID" value="NC_004113.1"/>
</dbReference>
<dbReference type="RefSeq" id="WP_024124637.1">
    <property type="nucleotide sequence ID" value="NC_004113.1"/>
</dbReference>
<dbReference type="PDB" id="1S5L">
    <property type="method" value="X-ray"/>
    <property type="resolution" value="3.50 A"/>
    <property type="chains" value="C/c=2-461"/>
</dbReference>
<dbReference type="PDB" id="1W5C">
    <property type="method" value="X-ray"/>
    <property type="resolution" value="3.20 A"/>
    <property type="chains" value="C/I=2-461"/>
</dbReference>
<dbReference type="PDB" id="2AXT">
    <property type="method" value="X-ray"/>
    <property type="resolution" value="3.00 A"/>
    <property type="chains" value="C/c=2-461"/>
</dbReference>
<dbReference type="PDB" id="3KZI">
    <property type="method" value="X-ray"/>
    <property type="resolution" value="3.60 A"/>
    <property type="chains" value="C=1-461"/>
</dbReference>
<dbReference type="PDB" id="4FBY">
    <property type="method" value="X-ray"/>
    <property type="resolution" value="6.56 A"/>
    <property type="chains" value="C/P=1-461"/>
</dbReference>
<dbReference type="PDB" id="4IXQ">
    <property type="method" value="X-ray"/>
    <property type="resolution" value="5.70 A"/>
    <property type="chains" value="C/c=1-461"/>
</dbReference>
<dbReference type="PDB" id="4IXR">
    <property type="method" value="X-ray"/>
    <property type="resolution" value="5.90 A"/>
    <property type="chains" value="C/c=1-461"/>
</dbReference>
<dbReference type="PDB" id="4PBU">
    <property type="method" value="X-ray"/>
    <property type="resolution" value="5.00 A"/>
    <property type="chains" value="C/c=7-461"/>
</dbReference>
<dbReference type="PDB" id="4PJ0">
    <property type="method" value="X-ray"/>
    <property type="resolution" value="2.44 A"/>
    <property type="chains" value="C/c=1-461"/>
</dbReference>
<dbReference type="PDB" id="4RVY">
    <property type="method" value="X-ray"/>
    <property type="resolution" value="5.50 A"/>
    <property type="chains" value="C/c=1-461"/>
</dbReference>
<dbReference type="PDB" id="4TNH">
    <property type="method" value="X-ray"/>
    <property type="resolution" value="4.90 A"/>
    <property type="chains" value="C/c=1-461"/>
</dbReference>
<dbReference type="PDB" id="4TNI">
    <property type="method" value="X-ray"/>
    <property type="resolution" value="4.60 A"/>
    <property type="chains" value="C/c=1-461"/>
</dbReference>
<dbReference type="PDB" id="4TNJ">
    <property type="method" value="X-ray"/>
    <property type="resolution" value="4.50 A"/>
    <property type="chains" value="C/c=1-461"/>
</dbReference>
<dbReference type="PDB" id="4TNK">
    <property type="method" value="X-ray"/>
    <property type="resolution" value="5.20 A"/>
    <property type="chains" value="C/c=1-461"/>
</dbReference>
<dbReference type="PDB" id="4V62">
    <property type="method" value="X-ray"/>
    <property type="resolution" value="2.90 A"/>
    <property type="chains" value="AC/BC=1-461"/>
</dbReference>
<dbReference type="PDB" id="4V82">
    <property type="method" value="X-ray"/>
    <property type="resolution" value="3.20 A"/>
    <property type="chains" value="AC/BC=1-461"/>
</dbReference>
<dbReference type="PDB" id="5E79">
    <property type="method" value="X-ray"/>
    <property type="resolution" value="3.50 A"/>
    <property type="chains" value="C/c=11-461"/>
</dbReference>
<dbReference type="PDB" id="5E7C">
    <property type="method" value="X-ray"/>
    <property type="resolution" value="4.50 A"/>
    <property type="chains" value="C/c=11-461"/>
</dbReference>
<dbReference type="PDB" id="5H2F">
    <property type="method" value="X-ray"/>
    <property type="resolution" value="2.20 A"/>
    <property type="chains" value="C/c=7-461"/>
</dbReference>
<dbReference type="PDB" id="5KAF">
    <property type="method" value="X-ray"/>
    <property type="resolution" value="3.00 A"/>
    <property type="chains" value="C/c=1-461"/>
</dbReference>
<dbReference type="PDB" id="5KAI">
    <property type="method" value="X-ray"/>
    <property type="resolution" value="2.80 A"/>
    <property type="chains" value="C/c=1-461"/>
</dbReference>
<dbReference type="PDB" id="5MX2">
    <property type="method" value="X-ray"/>
    <property type="resolution" value="2.20 A"/>
    <property type="chains" value="C/c=1-461"/>
</dbReference>
<dbReference type="PDB" id="5TIS">
    <property type="method" value="X-ray"/>
    <property type="resolution" value="2.25 A"/>
    <property type="chains" value="C/c=1-461"/>
</dbReference>
<dbReference type="PDB" id="5ZZN">
    <property type="method" value="X-ray"/>
    <property type="resolution" value="2.10 A"/>
    <property type="chains" value="C/c=7-461"/>
</dbReference>
<dbReference type="PDB" id="6DHE">
    <property type="method" value="X-ray"/>
    <property type="resolution" value="2.05 A"/>
    <property type="chains" value="C/c=11-461"/>
</dbReference>
<dbReference type="PDB" id="6DHF">
    <property type="method" value="X-ray"/>
    <property type="resolution" value="2.08 A"/>
    <property type="chains" value="C/c=11-461"/>
</dbReference>
<dbReference type="PDB" id="6DHG">
    <property type="method" value="X-ray"/>
    <property type="resolution" value="2.50 A"/>
    <property type="chains" value="C/c=11-461"/>
</dbReference>
<dbReference type="PDB" id="6DHH">
    <property type="method" value="X-ray"/>
    <property type="resolution" value="2.20 A"/>
    <property type="chains" value="C/c=11-461"/>
</dbReference>
<dbReference type="PDB" id="6DHO">
    <property type="method" value="X-ray"/>
    <property type="resolution" value="2.07 A"/>
    <property type="chains" value="C/c=11-461"/>
</dbReference>
<dbReference type="PDB" id="6DHP">
    <property type="method" value="X-ray"/>
    <property type="resolution" value="2.04 A"/>
    <property type="chains" value="C/c=11-461"/>
</dbReference>
<dbReference type="PDB" id="6W1O">
    <property type="method" value="X-ray"/>
    <property type="resolution" value="2.08 A"/>
    <property type="chains" value="C/c=1-461"/>
</dbReference>
<dbReference type="PDB" id="6W1P">
    <property type="method" value="X-ray"/>
    <property type="resolution" value="2.26 A"/>
    <property type="chains" value="C/c=1-461"/>
</dbReference>
<dbReference type="PDB" id="6W1Q">
    <property type="method" value="X-ray"/>
    <property type="resolution" value="2.27 A"/>
    <property type="chains" value="C/c=1-461"/>
</dbReference>
<dbReference type="PDB" id="6W1R">
    <property type="method" value="X-ray"/>
    <property type="resolution" value="2.23 A"/>
    <property type="chains" value="C/c=1-461"/>
</dbReference>
<dbReference type="PDB" id="6W1T">
    <property type="method" value="X-ray"/>
    <property type="resolution" value="2.01 A"/>
    <property type="chains" value="C/c=1-461"/>
</dbReference>
<dbReference type="PDB" id="6W1U">
    <property type="method" value="X-ray"/>
    <property type="resolution" value="2.09 A"/>
    <property type="chains" value="C/c=1-461"/>
</dbReference>
<dbReference type="PDB" id="6W1V">
    <property type="method" value="X-ray"/>
    <property type="resolution" value="2.09 A"/>
    <property type="chains" value="C/c=1-461"/>
</dbReference>
<dbReference type="PDB" id="7NHO">
    <property type="method" value="EM"/>
    <property type="resolution" value="2.66 A"/>
    <property type="chains" value="C=1-461"/>
</dbReference>
<dbReference type="PDB" id="7NHP">
    <property type="method" value="EM"/>
    <property type="resolution" value="2.72 A"/>
    <property type="chains" value="C=1-461"/>
</dbReference>
<dbReference type="PDB" id="7NHQ">
    <property type="method" value="EM"/>
    <property type="resolution" value="2.68 A"/>
    <property type="chains" value="C=1-461"/>
</dbReference>
<dbReference type="PDB" id="7RF1">
    <property type="method" value="X-ray"/>
    <property type="resolution" value="1.89 A"/>
    <property type="chains" value="C/c=1-461"/>
</dbReference>
<dbReference type="PDB" id="7RF2">
    <property type="method" value="X-ray"/>
    <property type="resolution" value="2.08 A"/>
    <property type="chains" value="C/c=1-461"/>
</dbReference>
<dbReference type="PDB" id="7RF3">
    <property type="method" value="X-ray"/>
    <property type="resolution" value="2.26 A"/>
    <property type="chains" value="C/c=1-461"/>
</dbReference>
<dbReference type="PDB" id="7RF4">
    <property type="method" value="X-ray"/>
    <property type="resolution" value="2.27 A"/>
    <property type="chains" value="C/c=1-461"/>
</dbReference>
<dbReference type="PDB" id="7RF5">
    <property type="method" value="X-ray"/>
    <property type="resolution" value="2.23 A"/>
    <property type="chains" value="C/c=1-461"/>
</dbReference>
<dbReference type="PDB" id="7RF6">
    <property type="method" value="X-ray"/>
    <property type="resolution" value="2.01 A"/>
    <property type="chains" value="C/c=1-461"/>
</dbReference>
<dbReference type="PDB" id="7RF7">
    <property type="method" value="X-ray"/>
    <property type="resolution" value="2.09 A"/>
    <property type="chains" value="C/c=1-461"/>
</dbReference>
<dbReference type="PDB" id="7RF8">
    <property type="method" value="X-ray"/>
    <property type="resolution" value="2.09 A"/>
    <property type="chains" value="C/c=1-461"/>
</dbReference>
<dbReference type="PDB" id="7YQ2">
    <property type="method" value="X-ray"/>
    <property type="resolution" value="1.90 A"/>
    <property type="chains" value="C/c=1-461"/>
</dbReference>
<dbReference type="PDB" id="7YQ7">
    <property type="method" value="X-ray"/>
    <property type="resolution" value="1.90 A"/>
    <property type="chains" value="C/c=1-461"/>
</dbReference>
<dbReference type="PDB" id="8EZ5">
    <property type="method" value="X-ray"/>
    <property type="resolution" value="2.09 A"/>
    <property type="chains" value="C/c=1-461"/>
</dbReference>
<dbReference type="PDB" id="8F4C">
    <property type="method" value="X-ray"/>
    <property type="resolution" value="2.00 A"/>
    <property type="chains" value="C/c=1-461"/>
</dbReference>
<dbReference type="PDB" id="8F4D">
    <property type="method" value="X-ray"/>
    <property type="resolution" value="2.15 A"/>
    <property type="chains" value="C/c=1-461"/>
</dbReference>
<dbReference type="PDB" id="8F4E">
    <property type="method" value="X-ray"/>
    <property type="resolution" value="2.09 A"/>
    <property type="chains" value="C/c=1-461"/>
</dbReference>
<dbReference type="PDB" id="8F4F">
    <property type="method" value="X-ray"/>
    <property type="resolution" value="2.03 A"/>
    <property type="chains" value="C/c=1-461"/>
</dbReference>
<dbReference type="PDB" id="8F4G">
    <property type="method" value="X-ray"/>
    <property type="resolution" value="2.03 A"/>
    <property type="chains" value="C/c=1-461"/>
</dbReference>
<dbReference type="PDB" id="8F4H">
    <property type="method" value="X-ray"/>
    <property type="resolution" value="2.10 A"/>
    <property type="chains" value="C/c=1-461"/>
</dbReference>
<dbReference type="PDB" id="8F4I">
    <property type="method" value="X-ray"/>
    <property type="resolution" value="2.00 A"/>
    <property type="chains" value="C/c=1-461"/>
</dbReference>
<dbReference type="PDB" id="8F4J">
    <property type="method" value="X-ray"/>
    <property type="resolution" value="2.00 A"/>
    <property type="chains" value="C/c=1-461"/>
</dbReference>
<dbReference type="PDB" id="8F4K">
    <property type="method" value="X-ray"/>
    <property type="resolution" value="2.16 A"/>
    <property type="chains" value="C/c=1-461"/>
</dbReference>
<dbReference type="PDB" id="9EVX">
    <property type="method" value="EM"/>
    <property type="resolution" value="1.71 A"/>
    <property type="chains" value="C/c=1-461"/>
</dbReference>
<dbReference type="PDBsum" id="1S5L"/>
<dbReference type="PDBsum" id="1W5C"/>
<dbReference type="PDBsum" id="2AXT"/>
<dbReference type="PDBsum" id="3KZI"/>
<dbReference type="PDBsum" id="4FBY"/>
<dbReference type="PDBsum" id="4IXQ"/>
<dbReference type="PDBsum" id="4IXR"/>
<dbReference type="PDBsum" id="4PBU"/>
<dbReference type="PDBsum" id="4PJ0"/>
<dbReference type="PDBsum" id="4RVY"/>
<dbReference type="PDBsum" id="4TNH"/>
<dbReference type="PDBsum" id="4TNI"/>
<dbReference type="PDBsum" id="4TNJ"/>
<dbReference type="PDBsum" id="4TNK"/>
<dbReference type="PDBsum" id="4V62"/>
<dbReference type="PDBsum" id="4V82"/>
<dbReference type="PDBsum" id="5E79"/>
<dbReference type="PDBsum" id="5E7C"/>
<dbReference type="PDBsum" id="5H2F"/>
<dbReference type="PDBsum" id="5KAF"/>
<dbReference type="PDBsum" id="5KAI"/>
<dbReference type="PDBsum" id="5MX2"/>
<dbReference type="PDBsum" id="5TIS"/>
<dbReference type="PDBsum" id="5ZZN"/>
<dbReference type="PDBsum" id="6DHE"/>
<dbReference type="PDBsum" id="6DHF"/>
<dbReference type="PDBsum" id="6DHG"/>
<dbReference type="PDBsum" id="6DHH"/>
<dbReference type="PDBsum" id="6DHO"/>
<dbReference type="PDBsum" id="6DHP"/>
<dbReference type="PDBsum" id="6W1O"/>
<dbReference type="PDBsum" id="6W1P"/>
<dbReference type="PDBsum" id="6W1Q"/>
<dbReference type="PDBsum" id="6W1R"/>
<dbReference type="PDBsum" id="6W1T"/>
<dbReference type="PDBsum" id="6W1U"/>
<dbReference type="PDBsum" id="6W1V"/>
<dbReference type="PDBsum" id="7NHO"/>
<dbReference type="PDBsum" id="7NHP"/>
<dbReference type="PDBsum" id="7NHQ"/>
<dbReference type="PDBsum" id="7RF1"/>
<dbReference type="PDBsum" id="7RF2"/>
<dbReference type="PDBsum" id="7RF3"/>
<dbReference type="PDBsum" id="7RF4"/>
<dbReference type="PDBsum" id="7RF5"/>
<dbReference type="PDBsum" id="7RF6"/>
<dbReference type="PDBsum" id="7RF7"/>
<dbReference type="PDBsum" id="7RF8"/>
<dbReference type="PDBsum" id="7YQ2"/>
<dbReference type="PDBsum" id="7YQ7"/>
<dbReference type="PDBsum" id="8EZ5"/>
<dbReference type="PDBsum" id="8F4C"/>
<dbReference type="PDBsum" id="8F4D"/>
<dbReference type="PDBsum" id="8F4E"/>
<dbReference type="PDBsum" id="8F4F"/>
<dbReference type="PDBsum" id="8F4G"/>
<dbReference type="PDBsum" id="8F4H"/>
<dbReference type="PDBsum" id="8F4I"/>
<dbReference type="PDBsum" id="8F4J"/>
<dbReference type="PDBsum" id="8F4K"/>
<dbReference type="PDBsum" id="9EVX"/>
<dbReference type="EMDB" id="EMD-12335"/>
<dbReference type="EMDB" id="EMD-12336"/>
<dbReference type="EMDB" id="EMD-12337"/>
<dbReference type="EMDB" id="EMD-50019"/>
<dbReference type="SMR" id="Q8DIF8"/>
<dbReference type="DIP" id="DIP-48489N"/>
<dbReference type="IntAct" id="Q8DIF8">
    <property type="interactions" value="1"/>
</dbReference>
<dbReference type="STRING" id="197221.gene:10748233"/>
<dbReference type="EnsemblBacteria" id="BAC09183">
    <property type="protein sequence ID" value="BAC09183"/>
    <property type="gene ID" value="BAC09183"/>
</dbReference>
<dbReference type="KEGG" id="tel:tlr1631"/>
<dbReference type="PATRIC" id="fig|197221.4.peg.1711"/>
<dbReference type="eggNOG" id="ENOG502Z7VA">
    <property type="taxonomic scope" value="Bacteria"/>
</dbReference>
<dbReference type="EvolutionaryTrace" id="Q8DIF8"/>
<dbReference type="Proteomes" id="UP000000440">
    <property type="component" value="Chromosome"/>
</dbReference>
<dbReference type="GO" id="GO:0009523">
    <property type="term" value="C:photosystem II"/>
    <property type="evidence" value="ECO:0007669"/>
    <property type="project" value="UniProtKB-KW"/>
</dbReference>
<dbReference type="GO" id="GO:0031676">
    <property type="term" value="C:plasma membrane-derived thylakoid membrane"/>
    <property type="evidence" value="ECO:0007669"/>
    <property type="project" value="UniProtKB-SubCell"/>
</dbReference>
<dbReference type="GO" id="GO:0016168">
    <property type="term" value="F:chlorophyll binding"/>
    <property type="evidence" value="ECO:0007669"/>
    <property type="project" value="UniProtKB-UniRule"/>
</dbReference>
<dbReference type="GO" id="GO:0045156">
    <property type="term" value="F:electron transporter, transferring electrons within the cyclic electron transport pathway of photosynthesis activity"/>
    <property type="evidence" value="ECO:0007669"/>
    <property type="project" value="InterPro"/>
</dbReference>
<dbReference type="GO" id="GO:0046872">
    <property type="term" value="F:metal ion binding"/>
    <property type="evidence" value="ECO:0007669"/>
    <property type="project" value="UniProtKB-KW"/>
</dbReference>
<dbReference type="GO" id="GO:0009772">
    <property type="term" value="P:photosynthetic electron transport in photosystem II"/>
    <property type="evidence" value="ECO:0007669"/>
    <property type="project" value="InterPro"/>
</dbReference>
<dbReference type="FunFam" id="1.10.10.670:FF:000001">
    <property type="entry name" value="Photosystem II CP43 reaction center protein"/>
    <property type="match status" value="1"/>
</dbReference>
<dbReference type="Gene3D" id="1.10.10.670">
    <property type="entry name" value="photosystem ii from thermosynechococcus elongatus"/>
    <property type="match status" value="1"/>
</dbReference>
<dbReference type="HAMAP" id="MF_01496">
    <property type="entry name" value="PSII_PsbC_CP43"/>
    <property type="match status" value="1"/>
</dbReference>
<dbReference type="InterPro" id="IPR000932">
    <property type="entry name" value="PS_antenna-like"/>
</dbReference>
<dbReference type="InterPro" id="IPR036001">
    <property type="entry name" value="PS_II_antenna-like_sf"/>
</dbReference>
<dbReference type="InterPro" id="IPR005869">
    <property type="entry name" value="PSII_PsbC"/>
</dbReference>
<dbReference type="InterPro" id="IPR044900">
    <property type="entry name" value="PSII_PsbC_sf"/>
</dbReference>
<dbReference type="NCBIfam" id="TIGR03041">
    <property type="entry name" value="PS_antenn_a_b"/>
    <property type="match status" value="1"/>
</dbReference>
<dbReference type="NCBIfam" id="TIGR01153">
    <property type="entry name" value="psbC"/>
    <property type="match status" value="1"/>
</dbReference>
<dbReference type="Pfam" id="PF00421">
    <property type="entry name" value="PSII"/>
    <property type="match status" value="1"/>
</dbReference>
<dbReference type="SUPFAM" id="SSF161077">
    <property type="entry name" value="Photosystem II antenna protein-like"/>
    <property type="match status" value="1"/>
</dbReference>
<keyword id="KW-0002">3D-structure</keyword>
<keyword id="KW-0148">Chlorophyll</keyword>
<keyword id="KW-0157">Chromophore</keyword>
<keyword id="KW-0464">Manganese</keyword>
<keyword id="KW-0472">Membrane</keyword>
<keyword id="KW-0479">Metal-binding</keyword>
<keyword id="KW-0602">Photosynthesis</keyword>
<keyword id="KW-0604">Photosystem II</keyword>
<keyword id="KW-1185">Reference proteome</keyword>
<keyword id="KW-0793">Thylakoid</keyword>
<keyword id="KW-0812">Transmembrane</keyword>
<keyword id="KW-1133">Transmembrane helix</keyword>